<dbReference type="EMBL" id="BC083701">
    <property type="protein sequence ID" value="AAH83701.1"/>
    <property type="molecule type" value="mRNA"/>
</dbReference>
<dbReference type="RefSeq" id="NP_001007626.1">
    <property type="nucleotide sequence ID" value="NM_001007625.2"/>
</dbReference>
<dbReference type="SMR" id="Q5XII0"/>
<dbReference type="FunCoup" id="Q5XII0">
    <property type="interactions" value="1048"/>
</dbReference>
<dbReference type="IntAct" id="Q5XII0">
    <property type="interactions" value="1"/>
</dbReference>
<dbReference type="STRING" id="10116.ENSRNOP00000073174"/>
<dbReference type="GlyCosmos" id="Q5XII0">
    <property type="glycosylation" value="2 sites, 2 glycans"/>
</dbReference>
<dbReference type="GlyGen" id="Q5XII0">
    <property type="glycosylation" value="2 sites, 2 N-linked glycans (1 site)"/>
</dbReference>
<dbReference type="iPTMnet" id="Q5XII0"/>
<dbReference type="PhosphoSitePlus" id="Q5XII0"/>
<dbReference type="SwissPalm" id="Q5XII0"/>
<dbReference type="PaxDb" id="10116-ENSRNOP00000025674"/>
<dbReference type="Ensembl" id="ENSRNOT00000085923.2">
    <property type="protein sequence ID" value="ENSRNOP00000073174.1"/>
    <property type="gene ID" value="ENSRNOG00000060141.2"/>
</dbReference>
<dbReference type="GeneID" id="291180"/>
<dbReference type="KEGG" id="rno:291180"/>
<dbReference type="UCSC" id="RGD:1359161">
    <property type="organism name" value="rat"/>
</dbReference>
<dbReference type="AGR" id="RGD:1359161"/>
<dbReference type="CTD" id="54749"/>
<dbReference type="RGD" id="1359161">
    <property type="gene designation" value="Epdr1"/>
</dbReference>
<dbReference type="eggNOG" id="ENOG502QQ8T">
    <property type="taxonomic scope" value="Eukaryota"/>
</dbReference>
<dbReference type="GeneTree" id="ENSGT00940000164413"/>
<dbReference type="HOGENOM" id="CLU_097673_0_0_1"/>
<dbReference type="InParanoid" id="Q5XII0"/>
<dbReference type="OMA" id="TMKDCYP"/>
<dbReference type="OrthoDB" id="6084362at2759"/>
<dbReference type="PhylomeDB" id="Q5XII0"/>
<dbReference type="TreeFam" id="TF328581"/>
<dbReference type="PRO" id="PR:Q5XII0"/>
<dbReference type="Proteomes" id="UP000002494">
    <property type="component" value="Chromosome 17"/>
</dbReference>
<dbReference type="Bgee" id="ENSRNOG00000060141">
    <property type="expression patterns" value="Expressed in Ammon's horn and 17 other cell types or tissues"/>
</dbReference>
<dbReference type="GO" id="GO:0005576">
    <property type="term" value="C:extracellular region"/>
    <property type="evidence" value="ECO:0000266"/>
    <property type="project" value="RGD"/>
</dbReference>
<dbReference type="GO" id="GO:0043202">
    <property type="term" value="C:lysosomal lumen"/>
    <property type="evidence" value="ECO:0007669"/>
    <property type="project" value="UniProtKB-SubCell"/>
</dbReference>
<dbReference type="GO" id="GO:0005764">
    <property type="term" value="C:lysosome"/>
    <property type="evidence" value="ECO:0000266"/>
    <property type="project" value="RGD"/>
</dbReference>
<dbReference type="GO" id="GO:0005509">
    <property type="term" value="F:calcium ion binding"/>
    <property type="evidence" value="ECO:0007669"/>
    <property type="project" value="InterPro"/>
</dbReference>
<dbReference type="GO" id="GO:1905573">
    <property type="term" value="F:ganglioside GM1 binding"/>
    <property type="evidence" value="ECO:0000266"/>
    <property type="project" value="RGD"/>
</dbReference>
<dbReference type="GO" id="GO:0042802">
    <property type="term" value="F:identical protein binding"/>
    <property type="evidence" value="ECO:0000266"/>
    <property type="project" value="RGD"/>
</dbReference>
<dbReference type="GO" id="GO:0005543">
    <property type="term" value="F:phospholipid binding"/>
    <property type="evidence" value="ECO:0000266"/>
    <property type="project" value="RGD"/>
</dbReference>
<dbReference type="GO" id="GO:0007160">
    <property type="term" value="P:cell-matrix adhesion"/>
    <property type="evidence" value="ECO:0007669"/>
    <property type="project" value="InterPro"/>
</dbReference>
<dbReference type="GO" id="GO:1990764">
    <property type="term" value="P:myofibroblast contraction"/>
    <property type="evidence" value="ECO:0000266"/>
    <property type="project" value="RGD"/>
</dbReference>
<dbReference type="InterPro" id="IPR001299">
    <property type="entry name" value="Ependymin"/>
</dbReference>
<dbReference type="PANTHER" id="PTHR10697">
    <property type="entry name" value="MAMMALIAN EPENDYMIN-RELATED PROTEIN 1"/>
    <property type="match status" value="1"/>
</dbReference>
<dbReference type="PANTHER" id="PTHR10697:SF1">
    <property type="entry name" value="MAMMALIAN EPENDYMIN-RELATED PROTEIN 1"/>
    <property type="match status" value="1"/>
</dbReference>
<dbReference type="Pfam" id="PF00811">
    <property type="entry name" value="Ependymin"/>
    <property type="match status" value="1"/>
</dbReference>
<dbReference type="PRINTS" id="PR00317">
    <property type="entry name" value="EPENDYMIN"/>
</dbReference>
<dbReference type="SMART" id="SM00026">
    <property type="entry name" value="EPEND"/>
    <property type="match status" value="1"/>
</dbReference>
<feature type="signal peptide" evidence="3">
    <location>
        <begin position="1"/>
        <end position="37"/>
    </location>
</feature>
<feature type="chain" id="PRO_0000322977" description="Mammalian ependymin-related protein 1">
    <location>
        <begin position="38"/>
        <end position="224"/>
    </location>
</feature>
<feature type="glycosylation site" description="N-linked (GlcNAc...) asparagine" evidence="3">
    <location>
        <position position="130"/>
    </location>
</feature>
<feature type="glycosylation site" description="N-linked (GlcNAc...) asparagine" evidence="3">
    <location>
        <position position="182"/>
    </location>
</feature>
<feature type="disulfide bond" evidence="2">
    <location>
        <begin position="42"/>
        <end position="172"/>
    </location>
</feature>
<feature type="disulfide bond" evidence="2">
    <location>
        <begin position="88"/>
        <end position="222"/>
    </location>
</feature>
<feature type="disulfide bond" evidence="2">
    <location>
        <begin position="113"/>
        <end position="210"/>
    </location>
</feature>
<sequence length="224" mass="25639">MLTRAPRRLVQGPRETWLLGGLWVWILCGLGMAGSPGTPQPCQAPQQWEGRQVLYQQSSGHNSRALVSYDGLNQRVRVLDERKALIPCKRLFEYILLYKDGVMFQIEQATKLCAKIPLAEPWDPLDIPQNSTFEDQYSIGGPQEQIMVQEWSDRRTARSYETWIGVYTAKDCYPVQETFIRNYTVVLSTRFFDVQLGIKDPSVFTPPSTCQTAQPEKMKENCSL</sequence>
<accession>Q5XII0</accession>
<protein>
    <recommendedName>
        <fullName>Mammalian ependymin-related protein 1</fullName>
        <shortName>MERP-1</shortName>
    </recommendedName>
</protein>
<name>EPDR1_RAT</name>
<keyword id="KW-1015">Disulfide bond</keyword>
<keyword id="KW-0325">Glycoprotein</keyword>
<keyword id="KW-0446">Lipid-binding</keyword>
<keyword id="KW-0458">Lysosome</keyword>
<keyword id="KW-1185">Reference proteome</keyword>
<keyword id="KW-0964">Secreted</keyword>
<keyword id="KW-0732">Signal</keyword>
<gene>
    <name type="primary">Epdr1</name>
    <name type="synonym">Epdr2</name>
    <name type="synonym">Merp1</name>
    <name type="synonym">Merp2</name>
</gene>
<proteinExistence type="evidence at protein level"/>
<reference key="1">
    <citation type="journal article" date="2004" name="Genome Res.">
        <title>The status, quality, and expansion of the NIH full-length cDNA project: the Mammalian Gene Collection (MGC).</title>
        <authorList>
            <consortium name="The MGC Project Team"/>
        </authorList>
    </citation>
    <scope>NUCLEOTIDE SEQUENCE [LARGE SCALE MRNA]</scope>
    <source>
        <tissue>Heart</tissue>
    </source>
</reference>
<reference key="2">
    <citation type="journal article" date="2006" name="J. Biol. Chem.">
        <title>Demonstration of lysosomal localization for the mammalian ependymin-related protein using classical approaches combined with a novel density shift method.</title>
        <authorList>
            <person name="Della Valle M.C."/>
            <person name="Sleat D.E."/>
            <person name="Sohar I."/>
            <person name="Wen T."/>
            <person name="Pintar J.E."/>
            <person name="Jadot M."/>
            <person name="Lobel P."/>
        </authorList>
    </citation>
    <scope>SUBCELLULAR LOCATION</scope>
    <scope>TISSUE SPECIFICITY</scope>
</reference>
<evidence type="ECO:0000250" key="1">
    <source>
        <dbReference type="UniProtKB" id="Q99M71"/>
    </source>
</evidence>
<evidence type="ECO:0000250" key="2">
    <source>
        <dbReference type="UniProtKB" id="Q9UM22"/>
    </source>
</evidence>
<evidence type="ECO:0000255" key="3"/>
<evidence type="ECO:0000269" key="4">
    <source>
    </source>
</evidence>
<evidence type="ECO:0000305" key="5"/>
<comment type="function">
    <text evidence="2">Binds anionic lipids and gangliosides at acidic pH.</text>
</comment>
<comment type="subunit">
    <text evidence="2">Homodimer.</text>
</comment>
<comment type="subcellular location">
    <subcellularLocation>
        <location evidence="4">Lysosome lumen</location>
    </subcellularLocation>
    <subcellularLocation>
        <location evidence="2">Secreted</location>
    </subcellularLocation>
    <text evidence="2">Lysosomal and also secreted.</text>
</comment>
<comment type="tissue specificity">
    <text evidence="4">Detected in brain (at protein level).</text>
</comment>
<comment type="PTM">
    <text evidence="1">N-glycosylated; the glycan contains mannose-6-phosphate moieties.</text>
</comment>
<comment type="similarity">
    <text evidence="5">Belongs to the ependymin family.</text>
</comment>
<organism>
    <name type="scientific">Rattus norvegicus</name>
    <name type="common">Rat</name>
    <dbReference type="NCBI Taxonomy" id="10116"/>
    <lineage>
        <taxon>Eukaryota</taxon>
        <taxon>Metazoa</taxon>
        <taxon>Chordata</taxon>
        <taxon>Craniata</taxon>
        <taxon>Vertebrata</taxon>
        <taxon>Euteleostomi</taxon>
        <taxon>Mammalia</taxon>
        <taxon>Eutheria</taxon>
        <taxon>Euarchontoglires</taxon>
        <taxon>Glires</taxon>
        <taxon>Rodentia</taxon>
        <taxon>Myomorpha</taxon>
        <taxon>Muroidea</taxon>
        <taxon>Muridae</taxon>
        <taxon>Murinae</taxon>
        <taxon>Rattus</taxon>
    </lineage>
</organism>